<comment type="function">
    <text evidence="1">Component of the ribosome, a large ribonucleoprotein complex responsible for the synthesis of proteins in the cell. The small ribosomal subunit (SSU) binds messenger RNAs (mRNAs) and translates the encoded message by selecting cognate aminoacyl-transfer RNA (tRNA) molecules. The large subunit (LSU) contains the ribosomal catalytic site termed the peptidyl transferase center (PTC), which catalyzes the formation of peptide bonds, thereby polymerizing the amino acids delivered by tRNAs into a polypeptide chain. The nascent polypeptides leave the ribosome through a tunnel in the LSU and interact with protein factors that function in enzymatic processing, targeting, and the membrane insertion of nascent chains at the exit of the ribosomal tunnel.</text>
</comment>
<comment type="subunit">
    <text evidence="1">Component of the small ribosomal subunit (SSU). Mature yeast ribosomes consist of a small (40S) and a large (60S) subunit. The 40S small subunit contains 1 molecule of ribosomal RNA (18S rRNA) and at least 33 different proteins. The large 60S subunit contains 3 rRNA molecules (25S, 5.8S and 5S rRNA) and at least 46 different proteins.</text>
</comment>
<comment type="subcellular location">
    <subcellularLocation>
        <location evidence="2">Cytoplasm</location>
    </subcellularLocation>
    <subcellularLocation>
        <location evidence="2">Nucleus</location>
    </subcellularLocation>
</comment>
<comment type="miscellaneous">
    <text>There are 2 genes for uS8 in S.pombe.</text>
</comment>
<comment type="similarity">
    <text evidence="3">Belongs to the universal ribosomal protein uS8 family.</text>
</comment>
<accession>P0CT58</accession>
<accession>O14469</accession>
<dbReference type="EMBL" id="AB015353">
    <property type="protein sequence ID" value="BAA28848.1"/>
    <property type="molecule type" value="mRNA"/>
</dbReference>
<dbReference type="EMBL" id="CU329670">
    <property type="protein sequence ID" value="CAB16574.1"/>
    <property type="molecule type" value="Genomic_DNA"/>
</dbReference>
<dbReference type="PIR" id="T43373">
    <property type="entry name" value="T43373"/>
</dbReference>
<dbReference type="RefSeq" id="NP_593234.1">
    <property type="nucleotide sequence ID" value="NM_001018631.2"/>
</dbReference>
<dbReference type="RefSeq" id="NP_593367.1">
    <property type="nucleotide sequence ID" value="NM_001018799.2"/>
</dbReference>
<dbReference type="PDB" id="9AXT">
    <property type="method" value="EM"/>
    <property type="resolution" value="2.40 A"/>
    <property type="chains" value="Ac=1-130"/>
</dbReference>
<dbReference type="PDB" id="9AXV">
    <property type="method" value="EM"/>
    <property type="resolution" value="2.40 A"/>
    <property type="chains" value="Ac=1-130"/>
</dbReference>
<dbReference type="PDBsum" id="9AXT"/>
<dbReference type="PDBsum" id="9AXV"/>
<dbReference type="EMDB" id="EMD-43972"/>
<dbReference type="EMDB" id="EMD-43976"/>
<dbReference type="SMR" id="P0CT58"/>
<dbReference type="FunCoup" id="P0CT58">
    <property type="interactions" value="448"/>
</dbReference>
<dbReference type="STRING" id="284812.P0CT58"/>
<dbReference type="iPTMnet" id="P0CT58"/>
<dbReference type="PaxDb" id="4896-SPAC22A12.04c.1"/>
<dbReference type="EnsemblFungi" id="SPAC22A12.04c.1">
    <property type="protein sequence ID" value="SPAC22A12.04c.1:pep"/>
    <property type="gene ID" value="SPAC22A12.04c"/>
</dbReference>
<dbReference type="EnsemblFungi" id="SPAC5D6.01.1">
    <property type="protein sequence ID" value="SPAC5D6.01.1:pep"/>
    <property type="gene ID" value="SPAC5D6.01"/>
</dbReference>
<dbReference type="GeneID" id="2541838"/>
<dbReference type="KEGG" id="spo:2541838"/>
<dbReference type="PomBase" id="SPAC22A12.04c">
    <property type="gene designation" value="rps2201"/>
</dbReference>
<dbReference type="VEuPathDB" id="FungiDB:SPAC22A12.04c"/>
<dbReference type="VEuPathDB" id="FungiDB:SPAC5D6.01"/>
<dbReference type="eggNOG" id="KOG1754">
    <property type="taxonomic scope" value="Eukaryota"/>
</dbReference>
<dbReference type="InParanoid" id="P0CT58"/>
<dbReference type="OMA" id="LPAKNFG"/>
<dbReference type="PhylomeDB" id="P0CT58"/>
<dbReference type="Reactome" id="R-SPO-156827">
    <property type="pathway name" value="L13a-mediated translational silencing of Ceruloplasmin expression"/>
</dbReference>
<dbReference type="Reactome" id="R-SPO-1799339">
    <property type="pathway name" value="SRP-dependent cotranslational protein targeting to membrane"/>
</dbReference>
<dbReference type="Reactome" id="R-SPO-72649">
    <property type="pathway name" value="Translation initiation complex formation"/>
</dbReference>
<dbReference type="Reactome" id="R-SPO-72689">
    <property type="pathway name" value="Formation of a pool of free 40S subunits"/>
</dbReference>
<dbReference type="Reactome" id="R-SPO-72695">
    <property type="pathway name" value="Formation of the ternary complex, and subsequently, the 43S complex"/>
</dbReference>
<dbReference type="Reactome" id="R-SPO-72702">
    <property type="pathway name" value="Ribosomal scanning and start codon recognition"/>
</dbReference>
<dbReference type="Reactome" id="R-SPO-72706">
    <property type="pathway name" value="GTP hydrolysis and joining of the 60S ribosomal subunit"/>
</dbReference>
<dbReference type="Reactome" id="R-SPO-975956">
    <property type="pathway name" value="Nonsense Mediated Decay (NMD) independent of the Exon Junction Complex (EJC)"/>
</dbReference>
<dbReference type="Reactome" id="R-SPO-975957">
    <property type="pathway name" value="Nonsense Mediated Decay (NMD) enhanced by the Exon Junction Complex (EJC)"/>
</dbReference>
<dbReference type="PRO" id="PR:P0CT58"/>
<dbReference type="Proteomes" id="UP000002485">
    <property type="component" value="Chromosome I"/>
</dbReference>
<dbReference type="ExpressionAtlas" id="P0CT58">
    <property type="expression patterns" value="differential"/>
</dbReference>
<dbReference type="GO" id="GO:0010494">
    <property type="term" value="C:cytoplasmic stress granule"/>
    <property type="evidence" value="ECO:0000269"/>
    <property type="project" value="PomBase"/>
</dbReference>
<dbReference type="GO" id="GO:0005829">
    <property type="term" value="C:cytosol"/>
    <property type="evidence" value="ECO:0007005"/>
    <property type="project" value="PomBase"/>
</dbReference>
<dbReference type="GO" id="GO:0022627">
    <property type="term" value="C:cytosolic small ribosomal subunit"/>
    <property type="evidence" value="ECO:0000269"/>
    <property type="project" value="PomBase"/>
</dbReference>
<dbReference type="GO" id="GO:0005634">
    <property type="term" value="C:nucleus"/>
    <property type="evidence" value="ECO:0007005"/>
    <property type="project" value="PomBase"/>
</dbReference>
<dbReference type="GO" id="GO:0003735">
    <property type="term" value="F:structural constituent of ribosome"/>
    <property type="evidence" value="ECO:0000318"/>
    <property type="project" value="GO_Central"/>
</dbReference>
<dbReference type="GO" id="GO:0002181">
    <property type="term" value="P:cytoplasmic translation"/>
    <property type="evidence" value="ECO:0000266"/>
    <property type="project" value="PomBase"/>
</dbReference>
<dbReference type="FunFam" id="3.30.1370.30:FF:000001">
    <property type="entry name" value="40S ribosomal protein S15a"/>
    <property type="match status" value="1"/>
</dbReference>
<dbReference type="FunFam" id="3.30.1490.10:FF:000002">
    <property type="entry name" value="40S ribosomal protein S15a"/>
    <property type="match status" value="1"/>
</dbReference>
<dbReference type="Gene3D" id="3.30.1370.30">
    <property type="match status" value="1"/>
</dbReference>
<dbReference type="Gene3D" id="3.30.1490.10">
    <property type="match status" value="1"/>
</dbReference>
<dbReference type="InterPro" id="IPR000630">
    <property type="entry name" value="Ribosomal_uS8"/>
</dbReference>
<dbReference type="InterPro" id="IPR047863">
    <property type="entry name" value="Ribosomal_uS8_CS"/>
</dbReference>
<dbReference type="InterPro" id="IPR035987">
    <property type="entry name" value="Ribosomal_uS8_sf"/>
</dbReference>
<dbReference type="NCBIfam" id="NF003115">
    <property type="entry name" value="PRK04034.1"/>
    <property type="match status" value="1"/>
</dbReference>
<dbReference type="PANTHER" id="PTHR11758">
    <property type="entry name" value="40S RIBOSOMAL PROTEIN S15A"/>
    <property type="match status" value="1"/>
</dbReference>
<dbReference type="Pfam" id="PF00410">
    <property type="entry name" value="Ribosomal_S8"/>
    <property type="match status" value="1"/>
</dbReference>
<dbReference type="SUPFAM" id="SSF56047">
    <property type="entry name" value="Ribosomal protein S8"/>
    <property type="match status" value="1"/>
</dbReference>
<dbReference type="PROSITE" id="PS00053">
    <property type="entry name" value="RIBOSOMAL_S8"/>
    <property type="match status" value="1"/>
</dbReference>
<sequence length="130" mass="14760">MVRQSVLADCLNNIVNAERRGRRQVLIRPSSKVIVKFLTVMQKHGYIDEFTEIDDHRSGKIVIQLNGRINKCGVISPRFNVKLKDIEKWVNQLLPSRQVGVIVLTTSRGIMSHNEARAKDAGGKILGFFY</sequence>
<evidence type="ECO:0000250" key="1">
    <source>
        <dbReference type="UniProtKB" id="P0C0W1"/>
    </source>
</evidence>
<evidence type="ECO:0000269" key="2">
    <source>
    </source>
</evidence>
<evidence type="ECO:0000305" key="3"/>
<feature type="chain" id="PRO_0000126622" description="Small ribosomal subunit protein uS8A">
    <location>
        <begin position="1"/>
        <end position="130"/>
    </location>
</feature>
<keyword id="KW-0002">3D-structure</keyword>
<keyword id="KW-0963">Cytoplasm</keyword>
<keyword id="KW-0539">Nucleus</keyword>
<keyword id="KW-1185">Reference proteome</keyword>
<keyword id="KW-0687">Ribonucleoprotein</keyword>
<keyword id="KW-0689">Ribosomal protein</keyword>
<name>RS22A_SCHPO</name>
<gene>
    <name type="primary">rps2201</name>
    <name type="synonym">rps22a</name>
    <name type="ORF">SPAC22A12.04c</name>
</gene>
<proteinExistence type="evidence at protein level"/>
<organism>
    <name type="scientific">Schizosaccharomyces pombe (strain 972 / ATCC 24843)</name>
    <name type="common">Fission yeast</name>
    <dbReference type="NCBI Taxonomy" id="284812"/>
    <lineage>
        <taxon>Eukaryota</taxon>
        <taxon>Fungi</taxon>
        <taxon>Dikarya</taxon>
        <taxon>Ascomycota</taxon>
        <taxon>Taphrinomycotina</taxon>
        <taxon>Schizosaccharomycetes</taxon>
        <taxon>Schizosaccharomycetales</taxon>
        <taxon>Schizosaccharomycetaceae</taxon>
        <taxon>Schizosaccharomyces</taxon>
    </lineage>
</organism>
<protein>
    <recommendedName>
        <fullName evidence="3">Small ribosomal subunit protein uS8A</fullName>
    </recommendedName>
    <alternativeName>
        <fullName>40S ribosomal protein S22-A</fullName>
    </alternativeName>
</protein>
<reference key="1">
    <citation type="submission" date="1998-06" db="EMBL/GenBank/DDBJ databases">
        <title>S.pombe ribosomal protein S22 homolog.</title>
        <authorList>
            <person name="Kawamukai M."/>
        </authorList>
    </citation>
    <scope>NUCLEOTIDE SEQUENCE [MRNA]</scope>
</reference>
<reference key="2">
    <citation type="journal article" date="2002" name="Nature">
        <title>The genome sequence of Schizosaccharomyces pombe.</title>
        <authorList>
            <person name="Wood V."/>
            <person name="Gwilliam R."/>
            <person name="Rajandream M.A."/>
            <person name="Lyne M.H."/>
            <person name="Lyne R."/>
            <person name="Stewart A."/>
            <person name="Sgouros J.G."/>
            <person name="Peat N."/>
            <person name="Hayles J."/>
            <person name="Baker S.G."/>
            <person name="Basham D."/>
            <person name="Bowman S."/>
            <person name="Brooks K."/>
            <person name="Brown D."/>
            <person name="Brown S."/>
            <person name="Chillingworth T."/>
            <person name="Churcher C.M."/>
            <person name="Collins M."/>
            <person name="Connor R."/>
            <person name="Cronin A."/>
            <person name="Davis P."/>
            <person name="Feltwell T."/>
            <person name="Fraser A."/>
            <person name="Gentles S."/>
            <person name="Goble A."/>
            <person name="Hamlin N."/>
            <person name="Harris D.E."/>
            <person name="Hidalgo J."/>
            <person name="Hodgson G."/>
            <person name="Holroyd S."/>
            <person name="Hornsby T."/>
            <person name="Howarth S."/>
            <person name="Huckle E.J."/>
            <person name="Hunt S."/>
            <person name="Jagels K."/>
            <person name="James K.D."/>
            <person name="Jones L."/>
            <person name="Jones M."/>
            <person name="Leather S."/>
            <person name="McDonald S."/>
            <person name="McLean J."/>
            <person name="Mooney P."/>
            <person name="Moule S."/>
            <person name="Mungall K.L."/>
            <person name="Murphy L.D."/>
            <person name="Niblett D."/>
            <person name="Odell C."/>
            <person name="Oliver K."/>
            <person name="O'Neil S."/>
            <person name="Pearson D."/>
            <person name="Quail M.A."/>
            <person name="Rabbinowitsch E."/>
            <person name="Rutherford K.M."/>
            <person name="Rutter S."/>
            <person name="Saunders D."/>
            <person name="Seeger K."/>
            <person name="Sharp S."/>
            <person name="Skelton J."/>
            <person name="Simmonds M.N."/>
            <person name="Squares R."/>
            <person name="Squares S."/>
            <person name="Stevens K."/>
            <person name="Taylor K."/>
            <person name="Taylor R.G."/>
            <person name="Tivey A."/>
            <person name="Walsh S.V."/>
            <person name="Warren T."/>
            <person name="Whitehead S."/>
            <person name="Woodward J.R."/>
            <person name="Volckaert G."/>
            <person name="Aert R."/>
            <person name="Robben J."/>
            <person name="Grymonprez B."/>
            <person name="Weltjens I."/>
            <person name="Vanstreels E."/>
            <person name="Rieger M."/>
            <person name="Schaefer M."/>
            <person name="Mueller-Auer S."/>
            <person name="Gabel C."/>
            <person name="Fuchs M."/>
            <person name="Duesterhoeft A."/>
            <person name="Fritzc C."/>
            <person name="Holzer E."/>
            <person name="Moestl D."/>
            <person name="Hilbert H."/>
            <person name="Borzym K."/>
            <person name="Langer I."/>
            <person name="Beck A."/>
            <person name="Lehrach H."/>
            <person name="Reinhardt R."/>
            <person name="Pohl T.M."/>
            <person name="Eger P."/>
            <person name="Zimmermann W."/>
            <person name="Wedler H."/>
            <person name="Wambutt R."/>
            <person name="Purnelle B."/>
            <person name="Goffeau A."/>
            <person name="Cadieu E."/>
            <person name="Dreano S."/>
            <person name="Gloux S."/>
            <person name="Lelaure V."/>
            <person name="Mottier S."/>
            <person name="Galibert F."/>
            <person name="Aves S.J."/>
            <person name="Xiang Z."/>
            <person name="Hunt C."/>
            <person name="Moore K."/>
            <person name="Hurst S.M."/>
            <person name="Lucas M."/>
            <person name="Rochet M."/>
            <person name="Gaillardin C."/>
            <person name="Tallada V.A."/>
            <person name="Garzon A."/>
            <person name="Thode G."/>
            <person name="Daga R.R."/>
            <person name="Cruzado L."/>
            <person name="Jimenez J."/>
            <person name="Sanchez M."/>
            <person name="del Rey F."/>
            <person name="Benito J."/>
            <person name="Dominguez A."/>
            <person name="Revuelta J.L."/>
            <person name="Moreno S."/>
            <person name="Armstrong J."/>
            <person name="Forsburg S.L."/>
            <person name="Cerutti L."/>
            <person name="Lowe T."/>
            <person name="McCombie W.R."/>
            <person name="Paulsen I."/>
            <person name="Potashkin J."/>
            <person name="Shpakovski G.V."/>
            <person name="Ussery D."/>
            <person name="Barrell B.G."/>
            <person name="Nurse P."/>
        </authorList>
    </citation>
    <scope>NUCLEOTIDE SEQUENCE [LARGE SCALE GENOMIC DNA]</scope>
    <source>
        <strain>972 / ATCC 24843</strain>
    </source>
</reference>
<reference key="3">
    <citation type="journal article" date="2006" name="Nat. Biotechnol.">
        <title>ORFeome cloning and global analysis of protein localization in the fission yeast Schizosaccharomyces pombe.</title>
        <authorList>
            <person name="Matsuyama A."/>
            <person name="Arai R."/>
            <person name="Yashiroda Y."/>
            <person name="Shirai A."/>
            <person name="Kamata A."/>
            <person name="Sekido S."/>
            <person name="Kobayashi Y."/>
            <person name="Hashimoto A."/>
            <person name="Hamamoto M."/>
            <person name="Hiraoka Y."/>
            <person name="Horinouchi S."/>
            <person name="Yoshida M."/>
        </authorList>
    </citation>
    <scope>SUBCELLULAR LOCATION [LARGE SCALE ANALYSIS]</scope>
</reference>